<accession>Q6QNL9</accession>
<keyword id="KW-0067">ATP-binding</keyword>
<keyword id="KW-0418">Kinase</keyword>
<keyword id="KW-0547">Nucleotide-binding</keyword>
<keyword id="KW-0723">Serine/threonine-protein kinase</keyword>
<keyword id="KW-0808">Transferase</keyword>
<reference key="1">
    <citation type="submission" date="2004-01" db="EMBL/GenBank/DDBJ databases">
        <title>Coccidian parasite casein kinase I as a chemotherapeutic target for anti-protozoal agents.</title>
        <authorList>
            <person name="Donald R.G.K."/>
            <person name="Liberator P.A."/>
            <person name="Zhong T."/>
        </authorList>
    </citation>
    <scope>NUCLEOTIDE SEQUENCE [MRNA]</scope>
</reference>
<comment type="function">
    <text evidence="1">Casein kinases are operationally defined by their preferential utilization of acidic proteins such as caseins as substrates. It can phosphorylate a large number of proteins (By similarity).</text>
</comment>
<comment type="catalytic activity">
    <reaction>
        <text>L-seryl-[protein] + ATP = O-phospho-L-seryl-[protein] + ADP + H(+)</text>
        <dbReference type="Rhea" id="RHEA:17989"/>
        <dbReference type="Rhea" id="RHEA-COMP:9863"/>
        <dbReference type="Rhea" id="RHEA-COMP:11604"/>
        <dbReference type="ChEBI" id="CHEBI:15378"/>
        <dbReference type="ChEBI" id="CHEBI:29999"/>
        <dbReference type="ChEBI" id="CHEBI:30616"/>
        <dbReference type="ChEBI" id="CHEBI:83421"/>
        <dbReference type="ChEBI" id="CHEBI:456216"/>
        <dbReference type="EC" id="2.7.11.1"/>
    </reaction>
</comment>
<comment type="catalytic activity">
    <reaction>
        <text>L-threonyl-[protein] + ATP = O-phospho-L-threonyl-[protein] + ADP + H(+)</text>
        <dbReference type="Rhea" id="RHEA:46608"/>
        <dbReference type="Rhea" id="RHEA-COMP:11060"/>
        <dbReference type="Rhea" id="RHEA-COMP:11605"/>
        <dbReference type="ChEBI" id="CHEBI:15378"/>
        <dbReference type="ChEBI" id="CHEBI:30013"/>
        <dbReference type="ChEBI" id="CHEBI:30616"/>
        <dbReference type="ChEBI" id="CHEBI:61977"/>
        <dbReference type="ChEBI" id="CHEBI:456216"/>
        <dbReference type="EC" id="2.7.11.1"/>
    </reaction>
</comment>
<comment type="similarity">
    <text evidence="5">Belongs to the protein kinase superfamily. CK1 Ser/Thr protein kinase family. Casein kinase I subfamily.</text>
</comment>
<proteinExistence type="evidence at transcript level"/>
<name>KC1_EIMTE</name>
<dbReference type="EC" id="2.7.11.1"/>
<dbReference type="EMBL" id="AY532162">
    <property type="protein sequence ID" value="AAS46021.1"/>
    <property type="molecule type" value="mRNA"/>
</dbReference>
<dbReference type="SMR" id="Q6QNL9"/>
<dbReference type="VEuPathDB" id="ToxoDB:ETH2_0935800"/>
<dbReference type="VEuPathDB" id="ToxoDB:ETH_00022575"/>
<dbReference type="GO" id="GO:0005524">
    <property type="term" value="F:ATP binding"/>
    <property type="evidence" value="ECO:0007669"/>
    <property type="project" value="UniProtKB-KW"/>
</dbReference>
<dbReference type="GO" id="GO:0106310">
    <property type="term" value="F:protein serine kinase activity"/>
    <property type="evidence" value="ECO:0007669"/>
    <property type="project" value="RHEA"/>
</dbReference>
<dbReference type="GO" id="GO:0004674">
    <property type="term" value="F:protein serine/threonine kinase activity"/>
    <property type="evidence" value="ECO:0007669"/>
    <property type="project" value="UniProtKB-KW"/>
</dbReference>
<dbReference type="CDD" id="cd14125">
    <property type="entry name" value="STKc_CK1_delta_epsilon"/>
    <property type="match status" value="1"/>
</dbReference>
<dbReference type="FunFam" id="1.10.510.10:FF:000635">
    <property type="entry name" value="Casein kinase I"/>
    <property type="match status" value="1"/>
</dbReference>
<dbReference type="FunFam" id="3.30.200.20:FF:000538">
    <property type="entry name" value="Putative Casein kinase I"/>
    <property type="match status" value="1"/>
</dbReference>
<dbReference type="Gene3D" id="1.10.510.10">
    <property type="entry name" value="Transferase(Phosphotransferase) domain 1"/>
    <property type="match status" value="1"/>
</dbReference>
<dbReference type="InterPro" id="IPR050235">
    <property type="entry name" value="CK1_Ser-Thr_kinase"/>
</dbReference>
<dbReference type="InterPro" id="IPR011009">
    <property type="entry name" value="Kinase-like_dom_sf"/>
</dbReference>
<dbReference type="InterPro" id="IPR000719">
    <property type="entry name" value="Prot_kinase_dom"/>
</dbReference>
<dbReference type="InterPro" id="IPR017441">
    <property type="entry name" value="Protein_kinase_ATP_BS"/>
</dbReference>
<dbReference type="InterPro" id="IPR008271">
    <property type="entry name" value="Ser/Thr_kinase_AS"/>
</dbReference>
<dbReference type="PANTHER" id="PTHR11909">
    <property type="entry name" value="CASEIN KINASE-RELATED"/>
    <property type="match status" value="1"/>
</dbReference>
<dbReference type="Pfam" id="PF00069">
    <property type="entry name" value="Pkinase"/>
    <property type="match status" value="1"/>
</dbReference>
<dbReference type="SMART" id="SM00220">
    <property type="entry name" value="S_TKc"/>
    <property type="match status" value="1"/>
</dbReference>
<dbReference type="SUPFAM" id="SSF56112">
    <property type="entry name" value="Protein kinase-like (PK-like)"/>
    <property type="match status" value="1"/>
</dbReference>
<dbReference type="PROSITE" id="PS00107">
    <property type="entry name" value="PROTEIN_KINASE_ATP"/>
    <property type="match status" value="1"/>
</dbReference>
<dbReference type="PROSITE" id="PS50011">
    <property type="entry name" value="PROTEIN_KINASE_DOM"/>
    <property type="match status" value="1"/>
</dbReference>
<dbReference type="PROSITE" id="PS00108">
    <property type="entry name" value="PROTEIN_KINASE_ST"/>
    <property type="match status" value="1"/>
</dbReference>
<evidence type="ECO:0000250" key="1"/>
<evidence type="ECO:0000255" key="2">
    <source>
        <dbReference type="PROSITE-ProRule" id="PRU00159"/>
    </source>
</evidence>
<evidence type="ECO:0000255" key="3">
    <source>
        <dbReference type="PROSITE-ProRule" id="PRU10027"/>
    </source>
</evidence>
<evidence type="ECO:0000256" key="4">
    <source>
        <dbReference type="SAM" id="MobiDB-lite"/>
    </source>
</evidence>
<evidence type="ECO:0000305" key="5"/>
<organism>
    <name type="scientific">Eimeria tenella</name>
    <name type="common">Coccidian parasite</name>
    <dbReference type="NCBI Taxonomy" id="5802"/>
    <lineage>
        <taxon>Eukaryota</taxon>
        <taxon>Sar</taxon>
        <taxon>Alveolata</taxon>
        <taxon>Apicomplexa</taxon>
        <taxon>Conoidasida</taxon>
        <taxon>Coccidia</taxon>
        <taxon>Eucoccidiorida</taxon>
        <taxon>Eimeriorina</taxon>
        <taxon>Eimeriidae</taxon>
        <taxon>Eimeria</taxon>
    </lineage>
</organism>
<sequence length="335" mass="39196">MDVRVGGKYRLGRKIGSGSFGDIYLGTNISTGDEVAIKLESVRSRHPQLIYESKLYKILTGGIGIPTLYWYGIEGDYNVMIIELLGPSLEDLFSICNRKLSLKTVLMLADQMLNRIEFVHSRHFIHRDIKPDNFLIGRGKKMSIVFAIDFGLAKKYRDPRTQSHIPYREGKNLTGTARYASVNTHLGIEQSRRDDLEALGYVLMYFNRGSLPWQGLKATTKKDKYDKIMEKKMSTPIEVLCKQFPFEFITYLNYCRSLRFEDRPDYSYLRRLFKDLFFREGYQYDFIFDWTFLHAERERERQRRSMVNQGAESGNQWRRDASGRDPLGRLPQLEP</sequence>
<feature type="chain" id="PRO_0000192850" description="Casein kinase I">
    <location>
        <begin position="1"/>
        <end position="335"/>
    </location>
</feature>
<feature type="domain" description="Protein kinase" evidence="2">
    <location>
        <begin position="9"/>
        <end position="278"/>
    </location>
</feature>
<feature type="region of interest" description="Disordered" evidence="4">
    <location>
        <begin position="304"/>
        <end position="335"/>
    </location>
</feature>
<feature type="compositionally biased region" description="Polar residues" evidence="4">
    <location>
        <begin position="305"/>
        <end position="316"/>
    </location>
</feature>
<feature type="compositionally biased region" description="Basic and acidic residues" evidence="4">
    <location>
        <begin position="317"/>
        <end position="327"/>
    </location>
</feature>
<feature type="active site" description="Proton acceptor" evidence="2 3">
    <location>
        <position position="128"/>
    </location>
</feature>
<feature type="binding site" evidence="2">
    <location>
        <begin position="15"/>
        <end position="23"/>
    </location>
    <ligand>
        <name>ATP</name>
        <dbReference type="ChEBI" id="CHEBI:30616"/>
    </ligand>
</feature>
<feature type="binding site" evidence="2">
    <location>
        <position position="38"/>
    </location>
    <ligand>
        <name>ATP</name>
        <dbReference type="ChEBI" id="CHEBI:30616"/>
    </ligand>
</feature>
<protein>
    <recommendedName>
        <fullName>Casein kinase I</fullName>
        <ecNumber>2.7.11.1</ecNumber>
    </recommendedName>
</protein>